<comment type="function">
    <text evidence="1">GTPase that plays an essential role in the late steps of ribosome biogenesis.</text>
</comment>
<comment type="subunit">
    <text evidence="1">Associates with the 50S ribosomal subunit.</text>
</comment>
<comment type="similarity">
    <text evidence="1">Belongs to the TRAFAC class TrmE-Era-EngA-EngB-Septin-like GTPase superfamily. EngA (Der) GTPase family.</text>
</comment>
<feature type="chain" id="PRO_1000011633" description="GTPase Der">
    <location>
        <begin position="1"/>
        <end position="434"/>
    </location>
</feature>
<feature type="domain" description="EngA-type G 1">
    <location>
        <begin position="3"/>
        <end position="167"/>
    </location>
</feature>
<feature type="domain" description="EngA-type G 2">
    <location>
        <begin position="175"/>
        <end position="350"/>
    </location>
</feature>
<feature type="domain" description="KH-like" evidence="1">
    <location>
        <begin position="351"/>
        <end position="434"/>
    </location>
</feature>
<feature type="binding site" evidence="1">
    <location>
        <begin position="9"/>
        <end position="16"/>
    </location>
    <ligand>
        <name>GTP</name>
        <dbReference type="ChEBI" id="CHEBI:37565"/>
        <label>1</label>
    </ligand>
</feature>
<feature type="binding site" evidence="1">
    <location>
        <begin position="56"/>
        <end position="60"/>
    </location>
    <ligand>
        <name>GTP</name>
        <dbReference type="ChEBI" id="CHEBI:37565"/>
        <label>1</label>
    </ligand>
</feature>
<feature type="binding site" evidence="1">
    <location>
        <begin position="119"/>
        <end position="122"/>
    </location>
    <ligand>
        <name>GTP</name>
        <dbReference type="ChEBI" id="CHEBI:37565"/>
        <label>1</label>
    </ligand>
</feature>
<feature type="binding site" evidence="1">
    <location>
        <begin position="181"/>
        <end position="188"/>
    </location>
    <ligand>
        <name>GTP</name>
        <dbReference type="ChEBI" id="CHEBI:37565"/>
        <label>2</label>
    </ligand>
</feature>
<feature type="binding site" evidence="1">
    <location>
        <begin position="228"/>
        <end position="232"/>
    </location>
    <ligand>
        <name>GTP</name>
        <dbReference type="ChEBI" id="CHEBI:37565"/>
        <label>2</label>
    </ligand>
</feature>
<feature type="binding site" evidence="1">
    <location>
        <begin position="293"/>
        <end position="296"/>
    </location>
    <ligand>
        <name>GTP</name>
        <dbReference type="ChEBI" id="CHEBI:37565"/>
        <label>2</label>
    </ligand>
</feature>
<gene>
    <name evidence="1" type="primary">der</name>
    <name type="synonym">engA</name>
    <name type="ordered locus">GFO_2990</name>
</gene>
<evidence type="ECO:0000255" key="1">
    <source>
        <dbReference type="HAMAP-Rule" id="MF_00195"/>
    </source>
</evidence>
<organism>
    <name type="scientific">Christiangramia forsetii (strain DSM 17595 / CGMCC 1.15422 / KT0803)</name>
    <name type="common">Gramella forsetii</name>
    <dbReference type="NCBI Taxonomy" id="411154"/>
    <lineage>
        <taxon>Bacteria</taxon>
        <taxon>Pseudomonadati</taxon>
        <taxon>Bacteroidota</taxon>
        <taxon>Flavobacteriia</taxon>
        <taxon>Flavobacteriales</taxon>
        <taxon>Flavobacteriaceae</taxon>
        <taxon>Christiangramia</taxon>
    </lineage>
</organism>
<dbReference type="EMBL" id="CU207366">
    <property type="protein sequence ID" value="CAL67936.1"/>
    <property type="molecule type" value="Genomic_DNA"/>
</dbReference>
<dbReference type="RefSeq" id="WP_011710837.1">
    <property type="nucleotide sequence ID" value="NC_008571.1"/>
</dbReference>
<dbReference type="SMR" id="A0M5P1"/>
<dbReference type="STRING" id="411154.GFO_2990"/>
<dbReference type="KEGG" id="gfo:GFO_2990"/>
<dbReference type="eggNOG" id="COG1160">
    <property type="taxonomic scope" value="Bacteria"/>
</dbReference>
<dbReference type="HOGENOM" id="CLU_016077_6_2_10"/>
<dbReference type="OrthoDB" id="9805918at2"/>
<dbReference type="Proteomes" id="UP000000755">
    <property type="component" value="Chromosome"/>
</dbReference>
<dbReference type="GO" id="GO:0005525">
    <property type="term" value="F:GTP binding"/>
    <property type="evidence" value="ECO:0007669"/>
    <property type="project" value="UniProtKB-UniRule"/>
</dbReference>
<dbReference type="GO" id="GO:0043022">
    <property type="term" value="F:ribosome binding"/>
    <property type="evidence" value="ECO:0007669"/>
    <property type="project" value="TreeGrafter"/>
</dbReference>
<dbReference type="GO" id="GO:0042254">
    <property type="term" value="P:ribosome biogenesis"/>
    <property type="evidence" value="ECO:0007669"/>
    <property type="project" value="UniProtKB-KW"/>
</dbReference>
<dbReference type="CDD" id="cd01894">
    <property type="entry name" value="EngA1"/>
    <property type="match status" value="1"/>
</dbReference>
<dbReference type="CDD" id="cd01895">
    <property type="entry name" value="EngA2"/>
    <property type="match status" value="1"/>
</dbReference>
<dbReference type="FunFam" id="3.30.300.20:FF:000004">
    <property type="entry name" value="GTPase Der"/>
    <property type="match status" value="1"/>
</dbReference>
<dbReference type="FunFam" id="3.40.50.300:FF:000040">
    <property type="entry name" value="GTPase Der"/>
    <property type="match status" value="1"/>
</dbReference>
<dbReference type="FunFam" id="3.40.50.300:FF:000953">
    <property type="entry name" value="GTPase Der"/>
    <property type="match status" value="1"/>
</dbReference>
<dbReference type="Gene3D" id="3.30.300.20">
    <property type="match status" value="1"/>
</dbReference>
<dbReference type="Gene3D" id="3.40.50.300">
    <property type="entry name" value="P-loop containing nucleotide triphosphate hydrolases"/>
    <property type="match status" value="2"/>
</dbReference>
<dbReference type="HAMAP" id="MF_00195">
    <property type="entry name" value="GTPase_Der"/>
    <property type="match status" value="1"/>
</dbReference>
<dbReference type="InterPro" id="IPR031166">
    <property type="entry name" value="G_ENGA"/>
</dbReference>
<dbReference type="InterPro" id="IPR006073">
    <property type="entry name" value="GTP-bd"/>
</dbReference>
<dbReference type="InterPro" id="IPR016484">
    <property type="entry name" value="GTPase_Der"/>
</dbReference>
<dbReference type="InterPro" id="IPR032859">
    <property type="entry name" value="KH_dom-like"/>
</dbReference>
<dbReference type="InterPro" id="IPR015946">
    <property type="entry name" value="KH_dom-like_a/b"/>
</dbReference>
<dbReference type="InterPro" id="IPR027417">
    <property type="entry name" value="P-loop_NTPase"/>
</dbReference>
<dbReference type="InterPro" id="IPR005225">
    <property type="entry name" value="Small_GTP-bd"/>
</dbReference>
<dbReference type="NCBIfam" id="TIGR03594">
    <property type="entry name" value="GTPase_EngA"/>
    <property type="match status" value="1"/>
</dbReference>
<dbReference type="NCBIfam" id="TIGR00231">
    <property type="entry name" value="small_GTP"/>
    <property type="match status" value="2"/>
</dbReference>
<dbReference type="PANTHER" id="PTHR43834">
    <property type="entry name" value="GTPASE DER"/>
    <property type="match status" value="1"/>
</dbReference>
<dbReference type="PANTHER" id="PTHR43834:SF6">
    <property type="entry name" value="GTPASE DER"/>
    <property type="match status" value="1"/>
</dbReference>
<dbReference type="Pfam" id="PF14714">
    <property type="entry name" value="KH_dom-like"/>
    <property type="match status" value="1"/>
</dbReference>
<dbReference type="Pfam" id="PF01926">
    <property type="entry name" value="MMR_HSR1"/>
    <property type="match status" value="2"/>
</dbReference>
<dbReference type="PIRSF" id="PIRSF006485">
    <property type="entry name" value="GTP-binding_EngA"/>
    <property type="match status" value="1"/>
</dbReference>
<dbReference type="PRINTS" id="PR00326">
    <property type="entry name" value="GTP1OBG"/>
</dbReference>
<dbReference type="SUPFAM" id="SSF52540">
    <property type="entry name" value="P-loop containing nucleoside triphosphate hydrolases"/>
    <property type="match status" value="2"/>
</dbReference>
<dbReference type="PROSITE" id="PS51712">
    <property type="entry name" value="G_ENGA"/>
    <property type="match status" value="2"/>
</dbReference>
<proteinExistence type="inferred from homology"/>
<name>DER_CHRFK</name>
<keyword id="KW-0342">GTP-binding</keyword>
<keyword id="KW-0547">Nucleotide-binding</keyword>
<keyword id="KW-0677">Repeat</keyword>
<keyword id="KW-0690">Ribosome biogenesis</keyword>
<protein>
    <recommendedName>
        <fullName evidence="1">GTPase Der</fullName>
    </recommendedName>
    <alternativeName>
        <fullName evidence="1">GTP-binding protein EngA</fullName>
    </alternativeName>
</protein>
<accession>A0M5P1</accession>
<reference key="1">
    <citation type="journal article" date="2006" name="Environ. Microbiol.">
        <title>Whole genome analysis of the marine Bacteroidetes'Gramella forsetii' reveals adaptations to degradation of polymeric organic matter.</title>
        <authorList>
            <person name="Bauer M."/>
            <person name="Kube M."/>
            <person name="Teeling H."/>
            <person name="Richter M."/>
            <person name="Lombardot T."/>
            <person name="Allers E."/>
            <person name="Wuerdemann C.A."/>
            <person name="Quast C."/>
            <person name="Kuhl H."/>
            <person name="Knaust F."/>
            <person name="Woebken D."/>
            <person name="Bischof K."/>
            <person name="Mussmann M."/>
            <person name="Choudhuri J.V."/>
            <person name="Meyer F."/>
            <person name="Reinhardt R."/>
            <person name="Amann R.I."/>
            <person name="Gloeckner F.O."/>
        </authorList>
    </citation>
    <scope>NUCLEOTIDE SEQUENCE [LARGE SCALE GENOMIC DNA]</scope>
    <source>
        <strain>DSM 17595 / CGMCC 1.15422 / KT0803</strain>
    </source>
</reference>
<sequence>MGNIVAIVGRPNVGKSTFFNRLIQRREAIIDSVSGVTRDRHYGKSDWNGKKFSLIDTGGYVKGSDDIFEAEIDKQVELAIDEADAIIFIVDVESGVTSMDEEVANLLRRVNKPVLLAVNKVDNNKRLANAVEFYSLGLGEYFPIASTNGSGTGDLLDALIEALPEIEEEDESELPRFAVVGRPNAGKSSFINALIGEDRYIVTDIAGTTRDSIDTRYNRFGFEFNLVDTAGIRRKSKVKENLEFYSVMRSVRAIENCDVCLVVLDATRGFDGQVQNIFWLAQRNHKGIVILVNKWDLVDKETNTMKEYEAMIRREIEPFTDVPIVFISVLTKQRVFKAIETAVKVFESRSKKIKTRQFNDVMLPIIERNPPPAYKGKYVKIKFCMQLPTPHPQFAFFCNLPQYVRDPYKRFLENKLRQEFDFQGVPISIFFRKK</sequence>